<sequence length="298" mass="29876">MPTTTDAASPARPRTGRTAVRAHASVRVERGPQGAPRLAELRSDVPIVLRMTGVSPVRTGARAGAGARADPGPLPTMTVHLVNGAAGPLAGDDLRLDISVGGGVRLVLRSVAATVALPGRGPGPSRLTVTAEVADGGELDLGPEPTVVADGADHQISTDVRLAATARLRLREEILLGRFGEPGGSILSTLRVDVAGGAEGPGADLAGGPFGWVPLLRQELLLGPQVPGLRGPAQLGGARAVGSLLVVAPAWAGAGPDAAVAEGVARLPLTGPGYLVSALADDAVTLRRRLTALADPTG</sequence>
<dbReference type="EMBL" id="CT573213">
    <property type="protein sequence ID" value="CAJ60098.1"/>
    <property type="status" value="ALT_INIT"/>
    <property type="molecule type" value="Genomic_DNA"/>
</dbReference>
<dbReference type="RefSeq" id="WP_041938919.1">
    <property type="nucleotide sequence ID" value="NC_008278.1"/>
</dbReference>
<dbReference type="SMR" id="Q0RQS5"/>
<dbReference type="STRING" id="326424.FRAAL1440"/>
<dbReference type="KEGG" id="fal:FRAAL1440"/>
<dbReference type="eggNOG" id="COG0829">
    <property type="taxonomic scope" value="Bacteria"/>
</dbReference>
<dbReference type="HOGENOM" id="CLU_055097_2_0_11"/>
<dbReference type="OrthoDB" id="8677206at2"/>
<dbReference type="Proteomes" id="UP000000657">
    <property type="component" value="Chromosome"/>
</dbReference>
<dbReference type="GO" id="GO:0005737">
    <property type="term" value="C:cytoplasm"/>
    <property type="evidence" value="ECO:0007669"/>
    <property type="project" value="UniProtKB-SubCell"/>
</dbReference>
<dbReference type="GO" id="GO:0016151">
    <property type="term" value="F:nickel cation binding"/>
    <property type="evidence" value="ECO:0007669"/>
    <property type="project" value="UniProtKB-UniRule"/>
</dbReference>
<dbReference type="HAMAP" id="MF_01384">
    <property type="entry name" value="UreD"/>
    <property type="match status" value="1"/>
</dbReference>
<dbReference type="InterPro" id="IPR002669">
    <property type="entry name" value="UreD"/>
</dbReference>
<dbReference type="Pfam" id="PF01774">
    <property type="entry name" value="UreD"/>
    <property type="match status" value="1"/>
</dbReference>
<gene>
    <name evidence="1" type="primary">ureD</name>
    <name type="ordered locus">FRAAL1440</name>
</gene>
<keyword id="KW-0143">Chaperone</keyword>
<keyword id="KW-0963">Cytoplasm</keyword>
<keyword id="KW-0996">Nickel insertion</keyword>
<keyword id="KW-1185">Reference proteome</keyword>
<evidence type="ECO:0000255" key="1">
    <source>
        <dbReference type="HAMAP-Rule" id="MF_01384"/>
    </source>
</evidence>
<evidence type="ECO:0000305" key="2"/>
<accession>Q0RQS5</accession>
<protein>
    <recommendedName>
        <fullName evidence="1">Urease accessory protein UreD</fullName>
    </recommendedName>
</protein>
<comment type="function">
    <text evidence="1">Required for maturation of urease via the functional incorporation of the urease nickel metallocenter.</text>
</comment>
<comment type="subunit">
    <text evidence="1">UreD, UreF and UreG form a complex that acts as a GTP-hydrolysis-dependent molecular chaperone, activating the urease apoprotein by helping to assemble the nickel containing metallocenter of UreC. The UreE protein probably delivers the nickel.</text>
</comment>
<comment type="subcellular location">
    <subcellularLocation>
        <location evidence="1">Cytoplasm</location>
    </subcellularLocation>
</comment>
<comment type="similarity">
    <text evidence="1">Belongs to the UreD family.</text>
</comment>
<comment type="sequence caution" evidence="2">
    <conflict type="erroneous initiation">
        <sequence resource="EMBL-CDS" id="CAJ60098"/>
    </conflict>
</comment>
<reference key="1">
    <citation type="journal article" date="2007" name="Genome Res.">
        <title>Genome characteristics of facultatively symbiotic Frankia sp. strains reflect host range and host plant biogeography.</title>
        <authorList>
            <person name="Normand P."/>
            <person name="Lapierre P."/>
            <person name="Tisa L.S."/>
            <person name="Gogarten J.P."/>
            <person name="Alloisio N."/>
            <person name="Bagnarol E."/>
            <person name="Bassi C.A."/>
            <person name="Berry A.M."/>
            <person name="Bickhart D.M."/>
            <person name="Choisne N."/>
            <person name="Couloux A."/>
            <person name="Cournoyer B."/>
            <person name="Cruveiller S."/>
            <person name="Daubin V."/>
            <person name="Demange N."/>
            <person name="Francino M.P."/>
            <person name="Goltsman E."/>
            <person name="Huang Y."/>
            <person name="Kopp O.R."/>
            <person name="Labarre L."/>
            <person name="Lapidus A."/>
            <person name="Lavire C."/>
            <person name="Marechal J."/>
            <person name="Martinez M."/>
            <person name="Mastronunzio J.E."/>
            <person name="Mullin B.C."/>
            <person name="Niemann J."/>
            <person name="Pujic P."/>
            <person name="Rawnsley T."/>
            <person name="Rouy Z."/>
            <person name="Schenowitz C."/>
            <person name="Sellstedt A."/>
            <person name="Tavares F."/>
            <person name="Tomkins J.P."/>
            <person name="Vallenet D."/>
            <person name="Valverde C."/>
            <person name="Wall L.G."/>
            <person name="Wang Y."/>
            <person name="Medigue C."/>
            <person name="Benson D.R."/>
        </authorList>
    </citation>
    <scope>NUCLEOTIDE SEQUENCE [LARGE SCALE GENOMIC DNA]</scope>
    <source>
        <strain>DSM 45986 / CECT 9034 / ACN14a</strain>
    </source>
</reference>
<proteinExistence type="inferred from homology"/>
<feature type="chain" id="PRO_0000346563" description="Urease accessory protein UreD">
    <location>
        <begin position="1"/>
        <end position="298"/>
    </location>
</feature>
<organism>
    <name type="scientific">Frankia alni (strain DSM 45986 / CECT 9034 / ACN14a)</name>
    <dbReference type="NCBI Taxonomy" id="326424"/>
    <lineage>
        <taxon>Bacteria</taxon>
        <taxon>Bacillati</taxon>
        <taxon>Actinomycetota</taxon>
        <taxon>Actinomycetes</taxon>
        <taxon>Frankiales</taxon>
        <taxon>Frankiaceae</taxon>
        <taxon>Frankia</taxon>
    </lineage>
</organism>
<name>URED_FRAAA</name>